<proteinExistence type="predicted"/>
<feature type="chain" id="PRO_0000168952" description="Uncharacterized protein YdfA">
    <location>
        <begin position="1"/>
        <end position="51"/>
    </location>
</feature>
<sequence>MDTIDLGNNESLVYGVFPNQDGTFTAMTYTKSKTFKTENGARRWLERNSGE</sequence>
<evidence type="ECO:0000305" key="1"/>
<keyword id="KW-1185">Reference proteome</keyword>
<reference key="1">
    <citation type="journal article" date="2001" name="Nature">
        <title>Genome sequence of enterohaemorrhagic Escherichia coli O157:H7.</title>
        <authorList>
            <person name="Perna N.T."/>
            <person name="Plunkett G. III"/>
            <person name="Burland V."/>
            <person name="Mau B."/>
            <person name="Glasner J.D."/>
            <person name="Rose D.J."/>
            <person name="Mayhew G.F."/>
            <person name="Evans P.S."/>
            <person name="Gregor J."/>
            <person name="Kirkpatrick H.A."/>
            <person name="Posfai G."/>
            <person name="Hackett J."/>
            <person name="Klink S."/>
            <person name="Boutin A."/>
            <person name="Shao Y."/>
            <person name="Miller L."/>
            <person name="Grotbeck E.J."/>
            <person name="Davis N.W."/>
            <person name="Lim A."/>
            <person name="Dimalanta E.T."/>
            <person name="Potamousis K."/>
            <person name="Apodaca J."/>
            <person name="Anantharaman T.S."/>
            <person name="Lin J."/>
            <person name="Yen G."/>
            <person name="Schwartz D.C."/>
            <person name="Welch R.A."/>
            <person name="Blattner F.R."/>
        </authorList>
    </citation>
    <scope>NUCLEOTIDE SEQUENCE [LARGE SCALE GENOMIC DNA]</scope>
    <source>
        <strain>O157:H7 / EDL933 / ATCC 700927 / EHEC</strain>
    </source>
</reference>
<reference key="2">
    <citation type="journal article" date="2001" name="DNA Res.">
        <title>Complete genome sequence of enterohemorrhagic Escherichia coli O157:H7 and genomic comparison with a laboratory strain K-12.</title>
        <authorList>
            <person name="Hayashi T."/>
            <person name="Makino K."/>
            <person name="Ohnishi M."/>
            <person name="Kurokawa K."/>
            <person name="Ishii K."/>
            <person name="Yokoyama K."/>
            <person name="Han C.-G."/>
            <person name="Ohtsubo E."/>
            <person name="Nakayama K."/>
            <person name="Murata T."/>
            <person name="Tanaka M."/>
            <person name="Tobe T."/>
            <person name="Iida T."/>
            <person name="Takami H."/>
            <person name="Honda T."/>
            <person name="Sasakawa C."/>
            <person name="Ogasawara N."/>
            <person name="Yasunaga T."/>
            <person name="Kuhara S."/>
            <person name="Shiba T."/>
            <person name="Hattori M."/>
            <person name="Shinagawa H."/>
        </authorList>
    </citation>
    <scope>NUCLEOTIDE SEQUENCE [LARGE SCALE GENOMIC DNA]</scope>
    <source>
        <strain>O157:H7 / Sakai / RIMD 0509952 / EHEC</strain>
    </source>
</reference>
<protein>
    <recommendedName>
        <fullName>Uncharacterized protein YdfA</fullName>
    </recommendedName>
</protein>
<accession>P0ACW9</accession>
<accession>P29008</accession>
<comment type="similarity">
    <text evidence="1">To E.coli YdaF.</text>
</comment>
<gene>
    <name type="primary">ydfA</name>
    <name type="ordered locus">Z1331</name>
    <name type="ordered locus">ECs1065</name>
</gene>
<organism>
    <name type="scientific">Escherichia coli O157:H7</name>
    <dbReference type="NCBI Taxonomy" id="83334"/>
    <lineage>
        <taxon>Bacteria</taxon>
        <taxon>Pseudomonadati</taxon>
        <taxon>Pseudomonadota</taxon>
        <taxon>Gammaproteobacteria</taxon>
        <taxon>Enterobacterales</taxon>
        <taxon>Enterobacteriaceae</taxon>
        <taxon>Escherichia</taxon>
    </lineage>
</organism>
<name>YDFA_ECO57</name>
<dbReference type="EMBL" id="AE005174">
    <property type="protein sequence ID" value="AAG55464.1"/>
    <property type="molecule type" value="Genomic_DNA"/>
</dbReference>
<dbReference type="EMBL" id="BA000007">
    <property type="protein sequence ID" value="BAB34488.1"/>
    <property type="molecule type" value="Genomic_DNA"/>
</dbReference>
<dbReference type="PIR" id="A90762">
    <property type="entry name" value="A90762"/>
</dbReference>
<dbReference type="PIR" id="D85625">
    <property type="entry name" value="D85625"/>
</dbReference>
<dbReference type="RefSeq" id="NP_309092.1">
    <property type="nucleotide sequence ID" value="NC_002695.1"/>
</dbReference>
<dbReference type="RefSeq" id="WP_000379575.1">
    <property type="nucleotide sequence ID" value="NZ_VOAI01000056.1"/>
</dbReference>
<dbReference type="STRING" id="155864.Z1331"/>
<dbReference type="KEGG" id="ece:Z1331"/>
<dbReference type="KEGG" id="ecs:ECs_1065"/>
<dbReference type="PATRIC" id="fig|386585.9.peg.1186"/>
<dbReference type="eggNOG" id="ENOG50331M0">
    <property type="taxonomic scope" value="Bacteria"/>
</dbReference>
<dbReference type="HOGENOM" id="CLU_191375_1_0_6"/>
<dbReference type="OMA" id="MFASTHR"/>
<dbReference type="Proteomes" id="UP000000558">
    <property type="component" value="Chromosome"/>
</dbReference>
<dbReference type="Proteomes" id="UP000002519">
    <property type="component" value="Chromosome"/>
</dbReference>
<dbReference type="InterPro" id="IPR009821">
    <property type="entry name" value="DUF1391"/>
</dbReference>
<dbReference type="Pfam" id="PF07151">
    <property type="entry name" value="DUF1391"/>
    <property type="match status" value="1"/>
</dbReference>